<sequence length="323" mass="37053">MIDFGNFYSLIAKNHLSHWLETLPAQIANWQREQQHGLFKQWSNAVEFLPEIKPYRLDLLHSVTAESEEPLSAGQIKRIETLMRNLMPWRKGPFSLYGVNIDTEWRSDWKWDRVLPHLSDLTGRTILDVGCGSGYHMWRMIGAGAHLAVGIDPTQLFLCQFEAVRKLLGNDQRAHLLPLGIEQLPALKAFDTVFSMGVLYHRRSPLEHLWQLKDQLVNEGELVLETLVIDGDENTVLVPGDRYAQMRNVYFIPSALALKNWLKKCGFVDIRIADVSVTTTEEQRRTEWMVTESLSDFLDPHDPSKTVEGYPAPKRAVLIARKP</sequence>
<keyword id="KW-1185">Reference proteome</keyword>
<keyword id="KW-0808">Transferase</keyword>
<keyword id="KW-0819">tRNA processing</keyword>
<dbReference type="EC" id="2.5.1.-" evidence="1"/>
<dbReference type="EMBL" id="AE005174">
    <property type="protein sequence ID" value="AAG56861.1"/>
    <property type="molecule type" value="Genomic_DNA"/>
</dbReference>
<dbReference type="EMBL" id="BA000007">
    <property type="protein sequence ID" value="BAB36004.1"/>
    <property type="molecule type" value="Genomic_DNA"/>
</dbReference>
<dbReference type="PIR" id="A85800">
    <property type="entry name" value="A85800"/>
</dbReference>
<dbReference type="PIR" id="E90951">
    <property type="entry name" value="E90951"/>
</dbReference>
<dbReference type="RefSeq" id="NP_310608.1">
    <property type="nucleotide sequence ID" value="NC_002695.1"/>
</dbReference>
<dbReference type="RefSeq" id="WP_000564730.1">
    <property type="nucleotide sequence ID" value="NZ_VOAI01000010.1"/>
</dbReference>
<dbReference type="SMR" id="Q8XCH5"/>
<dbReference type="STRING" id="155864.Z2924"/>
<dbReference type="GeneID" id="914170"/>
<dbReference type="KEGG" id="ece:Z2924"/>
<dbReference type="KEGG" id="ecs:ECs_2581"/>
<dbReference type="PATRIC" id="fig|386585.9.peg.2705"/>
<dbReference type="eggNOG" id="COG0500">
    <property type="taxonomic scope" value="Bacteria"/>
</dbReference>
<dbReference type="HOGENOM" id="CLU_052665_0_0_6"/>
<dbReference type="OMA" id="CEWRSDF"/>
<dbReference type="Proteomes" id="UP000000558">
    <property type="component" value="Chromosome"/>
</dbReference>
<dbReference type="Proteomes" id="UP000002519">
    <property type="component" value="Chromosome"/>
</dbReference>
<dbReference type="GO" id="GO:0016765">
    <property type="term" value="F:transferase activity, transferring alkyl or aryl (other than methyl) groups"/>
    <property type="evidence" value="ECO:0007669"/>
    <property type="project" value="UniProtKB-UniRule"/>
</dbReference>
<dbReference type="GO" id="GO:0002098">
    <property type="term" value="P:tRNA wobble uridine modification"/>
    <property type="evidence" value="ECO:0007669"/>
    <property type="project" value="InterPro"/>
</dbReference>
<dbReference type="CDD" id="cd02440">
    <property type="entry name" value="AdoMet_MTases"/>
    <property type="match status" value="1"/>
</dbReference>
<dbReference type="FunFam" id="3.40.50.150:FF:000080">
    <property type="entry name" value="tRNA U34 carboxymethyltransferase"/>
    <property type="match status" value="1"/>
</dbReference>
<dbReference type="Gene3D" id="3.40.50.150">
    <property type="entry name" value="Vaccinia Virus protein VP39"/>
    <property type="match status" value="1"/>
</dbReference>
<dbReference type="HAMAP" id="MF_01590">
    <property type="entry name" value="tRNA_carboxymethyltr_CmoB"/>
    <property type="match status" value="1"/>
</dbReference>
<dbReference type="InterPro" id="IPR010017">
    <property type="entry name" value="CmoB"/>
</dbReference>
<dbReference type="InterPro" id="IPR027555">
    <property type="entry name" value="Mo5U34_MeTrfas-like"/>
</dbReference>
<dbReference type="InterPro" id="IPR029063">
    <property type="entry name" value="SAM-dependent_MTases_sf"/>
</dbReference>
<dbReference type="NCBIfam" id="NF011650">
    <property type="entry name" value="PRK15068.1"/>
    <property type="match status" value="1"/>
</dbReference>
<dbReference type="NCBIfam" id="TIGR00452">
    <property type="entry name" value="tRNA 5-methoxyuridine(34)/uridine 5-oxyacetic acid(34) synthase CmoB"/>
    <property type="match status" value="1"/>
</dbReference>
<dbReference type="PANTHER" id="PTHR43861">
    <property type="entry name" value="TRANS-ACONITATE 2-METHYLTRANSFERASE-RELATED"/>
    <property type="match status" value="1"/>
</dbReference>
<dbReference type="Pfam" id="PF08003">
    <property type="entry name" value="Methyltransf_9"/>
    <property type="match status" value="1"/>
</dbReference>
<dbReference type="SUPFAM" id="SSF53335">
    <property type="entry name" value="S-adenosyl-L-methionine-dependent methyltransferases"/>
    <property type="match status" value="1"/>
</dbReference>
<evidence type="ECO:0000255" key="1">
    <source>
        <dbReference type="HAMAP-Rule" id="MF_01590"/>
    </source>
</evidence>
<reference key="1">
    <citation type="journal article" date="2001" name="Nature">
        <title>Genome sequence of enterohaemorrhagic Escherichia coli O157:H7.</title>
        <authorList>
            <person name="Perna N.T."/>
            <person name="Plunkett G. III"/>
            <person name="Burland V."/>
            <person name="Mau B."/>
            <person name="Glasner J.D."/>
            <person name="Rose D.J."/>
            <person name="Mayhew G.F."/>
            <person name="Evans P.S."/>
            <person name="Gregor J."/>
            <person name="Kirkpatrick H.A."/>
            <person name="Posfai G."/>
            <person name="Hackett J."/>
            <person name="Klink S."/>
            <person name="Boutin A."/>
            <person name="Shao Y."/>
            <person name="Miller L."/>
            <person name="Grotbeck E.J."/>
            <person name="Davis N.W."/>
            <person name="Lim A."/>
            <person name="Dimalanta E.T."/>
            <person name="Potamousis K."/>
            <person name="Apodaca J."/>
            <person name="Anantharaman T.S."/>
            <person name="Lin J."/>
            <person name="Yen G."/>
            <person name="Schwartz D.C."/>
            <person name="Welch R.A."/>
            <person name="Blattner F.R."/>
        </authorList>
    </citation>
    <scope>NUCLEOTIDE SEQUENCE [LARGE SCALE GENOMIC DNA]</scope>
    <source>
        <strain>O157:H7 / EDL933 / ATCC 700927 / EHEC</strain>
    </source>
</reference>
<reference key="2">
    <citation type="journal article" date="2001" name="DNA Res.">
        <title>Complete genome sequence of enterohemorrhagic Escherichia coli O157:H7 and genomic comparison with a laboratory strain K-12.</title>
        <authorList>
            <person name="Hayashi T."/>
            <person name="Makino K."/>
            <person name="Ohnishi M."/>
            <person name="Kurokawa K."/>
            <person name="Ishii K."/>
            <person name="Yokoyama K."/>
            <person name="Han C.-G."/>
            <person name="Ohtsubo E."/>
            <person name="Nakayama K."/>
            <person name="Murata T."/>
            <person name="Tanaka M."/>
            <person name="Tobe T."/>
            <person name="Iida T."/>
            <person name="Takami H."/>
            <person name="Honda T."/>
            <person name="Sasakawa C."/>
            <person name="Ogasawara N."/>
            <person name="Yasunaga T."/>
            <person name="Kuhara S."/>
            <person name="Shiba T."/>
            <person name="Hattori M."/>
            <person name="Shinagawa H."/>
        </authorList>
    </citation>
    <scope>NUCLEOTIDE SEQUENCE [LARGE SCALE GENOMIC DNA]</scope>
    <source>
        <strain>O157:H7 / Sakai / RIMD 0509952 / EHEC</strain>
    </source>
</reference>
<comment type="function">
    <text evidence="1">Catalyzes carboxymethyl transfer from carboxy-S-adenosyl-L-methionine (Cx-SAM) to 5-hydroxyuridine (ho5U) to form 5-carboxymethoxyuridine (cmo5U) at position 34 in tRNAs.</text>
</comment>
<comment type="catalytic activity">
    <reaction evidence="1">
        <text>carboxy-S-adenosyl-L-methionine + 5-hydroxyuridine(34) in tRNA = 5-carboxymethoxyuridine(34) in tRNA + S-adenosyl-L-homocysteine + H(+)</text>
        <dbReference type="Rhea" id="RHEA:52848"/>
        <dbReference type="Rhea" id="RHEA-COMP:13381"/>
        <dbReference type="Rhea" id="RHEA-COMP:13383"/>
        <dbReference type="ChEBI" id="CHEBI:15378"/>
        <dbReference type="ChEBI" id="CHEBI:57856"/>
        <dbReference type="ChEBI" id="CHEBI:134278"/>
        <dbReference type="ChEBI" id="CHEBI:136877"/>
        <dbReference type="ChEBI" id="CHEBI:136879"/>
    </reaction>
</comment>
<comment type="subunit">
    <text evidence="1">Homotetramer.</text>
</comment>
<comment type="similarity">
    <text evidence="1">Belongs to the class I-like SAM-binding methyltransferase superfamily. CmoB family.</text>
</comment>
<organism>
    <name type="scientific">Escherichia coli O157:H7</name>
    <dbReference type="NCBI Taxonomy" id="83334"/>
    <lineage>
        <taxon>Bacteria</taxon>
        <taxon>Pseudomonadati</taxon>
        <taxon>Pseudomonadota</taxon>
        <taxon>Gammaproteobacteria</taxon>
        <taxon>Enterobacterales</taxon>
        <taxon>Enterobacteriaceae</taxon>
        <taxon>Escherichia</taxon>
    </lineage>
</organism>
<accession>Q8XCH5</accession>
<accession>Q7AD61</accession>
<protein>
    <recommendedName>
        <fullName evidence="1">tRNA U34 carboxymethyltransferase</fullName>
        <ecNumber evidence="1">2.5.1.-</ecNumber>
    </recommendedName>
</protein>
<name>CMOB_ECO57</name>
<proteinExistence type="inferred from homology"/>
<gene>
    <name evidence="1" type="primary">cmoB</name>
    <name type="ordered locus">Z2924</name>
    <name type="ordered locus">ECs2581</name>
</gene>
<feature type="chain" id="PRO_0000313916" description="tRNA U34 carboxymethyltransferase">
    <location>
        <begin position="1"/>
        <end position="323"/>
    </location>
</feature>
<feature type="binding site" evidence="1">
    <location>
        <position position="91"/>
    </location>
    <ligand>
        <name>carboxy-S-adenosyl-L-methionine</name>
        <dbReference type="ChEBI" id="CHEBI:134278"/>
    </ligand>
</feature>
<feature type="binding site" evidence="1">
    <location>
        <position position="105"/>
    </location>
    <ligand>
        <name>carboxy-S-adenosyl-L-methionine</name>
        <dbReference type="ChEBI" id="CHEBI:134278"/>
    </ligand>
</feature>
<feature type="binding site" evidence="1">
    <location>
        <position position="110"/>
    </location>
    <ligand>
        <name>carboxy-S-adenosyl-L-methionine</name>
        <dbReference type="ChEBI" id="CHEBI:134278"/>
    </ligand>
</feature>
<feature type="binding site" evidence="1">
    <location>
        <position position="130"/>
    </location>
    <ligand>
        <name>carboxy-S-adenosyl-L-methionine</name>
        <dbReference type="ChEBI" id="CHEBI:134278"/>
    </ligand>
</feature>
<feature type="binding site" evidence="1">
    <location>
        <begin position="152"/>
        <end position="154"/>
    </location>
    <ligand>
        <name>carboxy-S-adenosyl-L-methionine</name>
        <dbReference type="ChEBI" id="CHEBI:134278"/>
    </ligand>
</feature>
<feature type="binding site" evidence="1">
    <location>
        <begin position="181"/>
        <end position="182"/>
    </location>
    <ligand>
        <name>carboxy-S-adenosyl-L-methionine</name>
        <dbReference type="ChEBI" id="CHEBI:134278"/>
    </ligand>
</feature>
<feature type="binding site" evidence="1">
    <location>
        <position position="196"/>
    </location>
    <ligand>
        <name>carboxy-S-adenosyl-L-methionine</name>
        <dbReference type="ChEBI" id="CHEBI:134278"/>
    </ligand>
</feature>
<feature type="binding site" evidence="1">
    <location>
        <position position="200"/>
    </location>
    <ligand>
        <name>carboxy-S-adenosyl-L-methionine</name>
        <dbReference type="ChEBI" id="CHEBI:134278"/>
    </ligand>
</feature>
<feature type="binding site" evidence="1">
    <location>
        <position position="315"/>
    </location>
    <ligand>
        <name>carboxy-S-adenosyl-L-methionine</name>
        <dbReference type="ChEBI" id="CHEBI:134278"/>
    </ligand>
</feature>